<proteinExistence type="inferred from homology"/>
<sequence>MKTPKNDVYTVSRLNGEVRQLLEGQLGRIWLNAEISNFAAPGSGHWYLTLKDNFSQIRCAMFKGRNQAVTFRPANGQQVLVKGNISVYEPRGDYQLLIESMLPAGDGLLAQQYEALKMKLAAEGLFASDTKRPLPANIQKIGVVTSPTGAAIRDILHVLARRDSSIEVIIYPTPVQGSDAAKSICDAINLANSRAEVDVLLVTRGGGSLEDLWSFNDEGLAHTIYNSGIPVVSAVGHEVDMTISDYVADLRAPTPSAGAELLSKDADNKAQKLLSQLSRLKQAWQHYQLKKQSQVQTIEHRLQKQDPQRRLQMYEQSFDEMQLRLQQAMQTKLHAYALKQQNLSSRLANQSPQHRLTLEAQRLSYLSAKLNDAMDDKLKMSEQRLAHRAQQLDTVSPLATLSRGYSITLTGSGKVVQAPSDTCVGDTLTTRLRDGSVTSTVVEVS</sequence>
<organism>
    <name type="scientific">Shewanella pealeana (strain ATCC 700345 / ANG-SQ1)</name>
    <dbReference type="NCBI Taxonomy" id="398579"/>
    <lineage>
        <taxon>Bacteria</taxon>
        <taxon>Pseudomonadati</taxon>
        <taxon>Pseudomonadota</taxon>
        <taxon>Gammaproteobacteria</taxon>
        <taxon>Alteromonadales</taxon>
        <taxon>Shewanellaceae</taxon>
        <taxon>Shewanella</taxon>
    </lineage>
</organism>
<accession>A8H252</accession>
<protein>
    <recommendedName>
        <fullName evidence="1">Exodeoxyribonuclease 7 large subunit</fullName>
        <ecNumber evidence="1">3.1.11.6</ecNumber>
    </recommendedName>
    <alternativeName>
        <fullName evidence="1">Exodeoxyribonuclease VII large subunit</fullName>
        <shortName evidence="1">Exonuclease VII large subunit</shortName>
    </alternativeName>
</protein>
<evidence type="ECO:0000255" key="1">
    <source>
        <dbReference type="HAMAP-Rule" id="MF_00378"/>
    </source>
</evidence>
<gene>
    <name evidence="1" type="primary">xseA</name>
    <name type="ordered locus">Spea_1312</name>
</gene>
<dbReference type="EC" id="3.1.11.6" evidence="1"/>
<dbReference type="EMBL" id="CP000851">
    <property type="protein sequence ID" value="ABV86639.1"/>
    <property type="molecule type" value="Genomic_DNA"/>
</dbReference>
<dbReference type="RefSeq" id="WP_012154565.1">
    <property type="nucleotide sequence ID" value="NC_009901.1"/>
</dbReference>
<dbReference type="SMR" id="A8H252"/>
<dbReference type="STRING" id="398579.Spea_1312"/>
<dbReference type="KEGG" id="spl:Spea_1312"/>
<dbReference type="eggNOG" id="COG1570">
    <property type="taxonomic scope" value="Bacteria"/>
</dbReference>
<dbReference type="HOGENOM" id="CLU_023625_3_1_6"/>
<dbReference type="OrthoDB" id="9802795at2"/>
<dbReference type="Proteomes" id="UP000002608">
    <property type="component" value="Chromosome"/>
</dbReference>
<dbReference type="GO" id="GO:0005737">
    <property type="term" value="C:cytoplasm"/>
    <property type="evidence" value="ECO:0007669"/>
    <property type="project" value="UniProtKB-SubCell"/>
</dbReference>
<dbReference type="GO" id="GO:0009318">
    <property type="term" value="C:exodeoxyribonuclease VII complex"/>
    <property type="evidence" value="ECO:0007669"/>
    <property type="project" value="InterPro"/>
</dbReference>
<dbReference type="GO" id="GO:0008855">
    <property type="term" value="F:exodeoxyribonuclease VII activity"/>
    <property type="evidence" value="ECO:0007669"/>
    <property type="project" value="UniProtKB-UniRule"/>
</dbReference>
<dbReference type="GO" id="GO:0003676">
    <property type="term" value="F:nucleic acid binding"/>
    <property type="evidence" value="ECO:0007669"/>
    <property type="project" value="InterPro"/>
</dbReference>
<dbReference type="GO" id="GO:0006308">
    <property type="term" value="P:DNA catabolic process"/>
    <property type="evidence" value="ECO:0007669"/>
    <property type="project" value="UniProtKB-UniRule"/>
</dbReference>
<dbReference type="CDD" id="cd04489">
    <property type="entry name" value="ExoVII_LU_OBF"/>
    <property type="match status" value="1"/>
</dbReference>
<dbReference type="HAMAP" id="MF_00378">
    <property type="entry name" value="Exonuc_7_L"/>
    <property type="match status" value="1"/>
</dbReference>
<dbReference type="InterPro" id="IPR003753">
    <property type="entry name" value="Exonuc_VII_L"/>
</dbReference>
<dbReference type="InterPro" id="IPR020579">
    <property type="entry name" value="Exonuc_VII_lsu_C"/>
</dbReference>
<dbReference type="InterPro" id="IPR025824">
    <property type="entry name" value="OB-fold_nuc-bd_dom"/>
</dbReference>
<dbReference type="NCBIfam" id="TIGR00237">
    <property type="entry name" value="xseA"/>
    <property type="match status" value="1"/>
</dbReference>
<dbReference type="PANTHER" id="PTHR30008">
    <property type="entry name" value="EXODEOXYRIBONUCLEASE 7 LARGE SUBUNIT"/>
    <property type="match status" value="1"/>
</dbReference>
<dbReference type="PANTHER" id="PTHR30008:SF0">
    <property type="entry name" value="EXODEOXYRIBONUCLEASE 7 LARGE SUBUNIT"/>
    <property type="match status" value="1"/>
</dbReference>
<dbReference type="Pfam" id="PF02601">
    <property type="entry name" value="Exonuc_VII_L"/>
    <property type="match status" value="1"/>
</dbReference>
<dbReference type="Pfam" id="PF13742">
    <property type="entry name" value="tRNA_anti_2"/>
    <property type="match status" value="1"/>
</dbReference>
<keyword id="KW-0963">Cytoplasm</keyword>
<keyword id="KW-0269">Exonuclease</keyword>
<keyword id="KW-0378">Hydrolase</keyword>
<keyword id="KW-0540">Nuclease</keyword>
<keyword id="KW-1185">Reference proteome</keyword>
<reference key="1">
    <citation type="submission" date="2007-10" db="EMBL/GenBank/DDBJ databases">
        <title>Complete sequence of Shewanella pealeana ATCC 700345.</title>
        <authorList>
            <consortium name="US DOE Joint Genome Institute"/>
            <person name="Copeland A."/>
            <person name="Lucas S."/>
            <person name="Lapidus A."/>
            <person name="Barry K."/>
            <person name="Glavina del Rio T."/>
            <person name="Dalin E."/>
            <person name="Tice H."/>
            <person name="Pitluck S."/>
            <person name="Chertkov O."/>
            <person name="Brettin T."/>
            <person name="Bruce D."/>
            <person name="Detter J.C."/>
            <person name="Han C."/>
            <person name="Schmutz J."/>
            <person name="Larimer F."/>
            <person name="Land M."/>
            <person name="Hauser L."/>
            <person name="Kyrpides N."/>
            <person name="Kim E."/>
            <person name="Zhao J.-S.Z."/>
            <person name="Manno D."/>
            <person name="Hawari J."/>
            <person name="Richardson P."/>
        </authorList>
    </citation>
    <scope>NUCLEOTIDE SEQUENCE [LARGE SCALE GENOMIC DNA]</scope>
    <source>
        <strain>ATCC 700345 / ANG-SQ1</strain>
    </source>
</reference>
<feature type="chain" id="PRO_1000079993" description="Exodeoxyribonuclease 7 large subunit">
    <location>
        <begin position="1"/>
        <end position="445"/>
    </location>
</feature>
<name>EX7L_SHEPA</name>
<comment type="function">
    <text evidence="1">Bidirectionally degrades single-stranded DNA into large acid-insoluble oligonucleotides, which are then degraded further into small acid-soluble oligonucleotides.</text>
</comment>
<comment type="catalytic activity">
    <reaction evidence="1">
        <text>Exonucleolytic cleavage in either 5'- to 3'- or 3'- to 5'-direction to yield nucleoside 5'-phosphates.</text>
        <dbReference type="EC" id="3.1.11.6"/>
    </reaction>
</comment>
<comment type="subunit">
    <text evidence="1">Heterooligomer composed of large and small subunits.</text>
</comment>
<comment type="subcellular location">
    <subcellularLocation>
        <location evidence="1">Cytoplasm</location>
    </subcellularLocation>
</comment>
<comment type="similarity">
    <text evidence="1">Belongs to the XseA family.</text>
</comment>